<reference key="1">
    <citation type="journal article" date="2012" name="PLoS ONE">
        <title>Characterization of profilin polymorphism in pollen with a focus on multifunctionality.</title>
        <authorList>
            <person name="Jimenez-Lopez J.C."/>
            <person name="Morales S."/>
            <person name="Castro A.J."/>
            <person name="Volkmann D."/>
            <person name="Rodriguez-Garcia M.I."/>
            <person name="Alche Jde D."/>
        </authorList>
    </citation>
    <scope>NUCLEOTIDE SEQUENCE [MRNA]</scope>
    <scope>POLYMORPHISM</scope>
    <source>
        <strain>cv. Lucio</strain>
        <tissue>Pollen</tissue>
    </source>
</reference>
<reference key="2">
    <citation type="journal article" date="2013" name="PLoS ONE">
        <title>Analysis of the effects of polymorphism on pollen profilin structural functionality and the generation of conformational, T- and B-cell epitopes.</title>
        <authorList>
            <person name="Jimenez-Lopez J.C."/>
            <person name="Rodriguez-Garcia M.I."/>
            <person name="Alche J.D."/>
        </authorList>
    </citation>
    <scope>3D-STRUCTURE MODELING</scope>
    <scope>DISULFIDE BOND</scope>
</reference>
<proteinExistence type="evidence at protein level"/>
<keyword id="KW-0009">Actin-binding</keyword>
<keyword id="KW-0020">Allergen</keyword>
<keyword id="KW-0963">Cytoplasm</keyword>
<keyword id="KW-0206">Cytoskeleton</keyword>
<keyword id="KW-1015">Disulfide bond</keyword>
<keyword id="KW-0597">Phosphoprotein</keyword>
<comment type="function">
    <text evidence="1">Binds to actin and affects the structure of the cytoskeleton. At high concentrations, profilin prevents the polymerization of actin, whereas it enhances it at low concentrations (By similarity).</text>
</comment>
<comment type="subunit">
    <text evidence="1">Occurs in many kinds of cells as a complex with monomeric actin in a 1:1 ratio.</text>
</comment>
<comment type="subcellular location">
    <subcellularLocation>
        <location evidence="1">Cytoplasm</location>
        <location evidence="1">Cytoskeleton</location>
    </subcellularLocation>
</comment>
<comment type="PTM">
    <text evidence="1">Phosphorylated by MAP kinases.</text>
</comment>
<comment type="polymorphism">
    <text>Several isoforms of the allergen exist due to polymorphism.</text>
</comment>
<comment type="allergen">
    <text>Causes an allergic reaction in human.</text>
</comment>
<comment type="miscellaneous">
    <text evidence="3">The variability of the residues taking part of IgE-binding epitopes might be responsible of the difference in cross-reactivity among olive pollen cultivars, and between distantly related pollen species, leading to a variable range of allergy reactions among atopic patients.</text>
</comment>
<comment type="similarity">
    <text evidence="2">Belongs to the profilin family.</text>
</comment>
<sequence>MSWQAYVDDHLMCDIEGHEGHRLTAAAIVGHDGSVWAQSATFPQFKPEEMNGIMTDFNEPGHLAPTGLHLGGTKYMVIQGEAGAVIRGKKGSGGITIKKTGQALVFGIYEEPVTPGQCNMVVERLGDYLLEQGL</sequence>
<dbReference type="EMBL" id="DQ138362">
    <property type="protein sequence ID" value="AAZ30440.1"/>
    <property type="molecule type" value="mRNA"/>
</dbReference>
<dbReference type="EMBL" id="DQ138365">
    <property type="protein sequence ID" value="AAZ30443.1"/>
    <property type="molecule type" value="mRNA"/>
</dbReference>
<dbReference type="SMR" id="P0DKD7"/>
<dbReference type="GO" id="GO:0005938">
    <property type="term" value="C:cell cortex"/>
    <property type="evidence" value="ECO:0007669"/>
    <property type="project" value="TreeGrafter"/>
</dbReference>
<dbReference type="GO" id="GO:0005856">
    <property type="term" value="C:cytoskeleton"/>
    <property type="evidence" value="ECO:0007669"/>
    <property type="project" value="UniProtKB-SubCell"/>
</dbReference>
<dbReference type="GO" id="GO:0003785">
    <property type="term" value="F:actin monomer binding"/>
    <property type="evidence" value="ECO:0007669"/>
    <property type="project" value="TreeGrafter"/>
</dbReference>
<dbReference type="CDD" id="cd00148">
    <property type="entry name" value="PROF"/>
    <property type="match status" value="1"/>
</dbReference>
<dbReference type="FunFam" id="3.30.450.30:FF:000001">
    <property type="entry name" value="Profilin"/>
    <property type="match status" value="1"/>
</dbReference>
<dbReference type="Gene3D" id="3.30.450.30">
    <property type="entry name" value="Dynein light chain 2a, cytoplasmic"/>
    <property type="match status" value="1"/>
</dbReference>
<dbReference type="InterPro" id="IPR048278">
    <property type="entry name" value="PFN"/>
</dbReference>
<dbReference type="InterPro" id="IPR005455">
    <property type="entry name" value="PFN_euk"/>
</dbReference>
<dbReference type="InterPro" id="IPR036140">
    <property type="entry name" value="PFN_sf"/>
</dbReference>
<dbReference type="InterPro" id="IPR027310">
    <property type="entry name" value="Profilin_CS"/>
</dbReference>
<dbReference type="PANTHER" id="PTHR11604">
    <property type="entry name" value="PROFILIN"/>
    <property type="match status" value="1"/>
</dbReference>
<dbReference type="PANTHER" id="PTHR11604:SF25">
    <property type="entry name" value="PROFILIN-5"/>
    <property type="match status" value="1"/>
</dbReference>
<dbReference type="Pfam" id="PF00235">
    <property type="entry name" value="Profilin"/>
    <property type="match status" value="1"/>
</dbReference>
<dbReference type="PRINTS" id="PR00392">
    <property type="entry name" value="PROFILIN"/>
</dbReference>
<dbReference type="PRINTS" id="PR01640">
    <property type="entry name" value="PROFILINPLNT"/>
</dbReference>
<dbReference type="SMART" id="SM00392">
    <property type="entry name" value="PROF"/>
    <property type="match status" value="1"/>
</dbReference>
<dbReference type="SUPFAM" id="SSF55770">
    <property type="entry name" value="Profilin (actin-binding protein)"/>
    <property type="match status" value="1"/>
</dbReference>
<dbReference type="PROSITE" id="PS00414">
    <property type="entry name" value="PROFILIN"/>
    <property type="match status" value="1"/>
</dbReference>
<feature type="initiator methionine" description="Removed" evidence="1">
    <location>
        <position position="1"/>
    </location>
</feature>
<feature type="chain" id="PRO_0000424978" description="Profilin-1">
    <location>
        <begin position="2"/>
        <end position="134"/>
    </location>
</feature>
<feature type="short sequence motif" description="Involved in PIP2 interaction">
    <location>
        <begin position="84"/>
        <end position="100"/>
    </location>
</feature>
<feature type="modified residue" description="Phosphothreonine" evidence="1">
    <location>
        <position position="114"/>
    </location>
</feature>
<feature type="disulfide bond" evidence="3">
    <location>
        <begin position="13"/>
        <end position="118"/>
    </location>
</feature>
<organism>
    <name type="scientific">Olea europaea</name>
    <name type="common">Common olive</name>
    <dbReference type="NCBI Taxonomy" id="4146"/>
    <lineage>
        <taxon>Eukaryota</taxon>
        <taxon>Viridiplantae</taxon>
        <taxon>Streptophyta</taxon>
        <taxon>Embryophyta</taxon>
        <taxon>Tracheophyta</taxon>
        <taxon>Spermatophyta</taxon>
        <taxon>Magnoliopsida</taxon>
        <taxon>eudicotyledons</taxon>
        <taxon>Gunneridae</taxon>
        <taxon>Pentapetalae</taxon>
        <taxon>asterids</taxon>
        <taxon>lamiids</taxon>
        <taxon>Lamiales</taxon>
        <taxon>Oleaceae</taxon>
        <taxon>Oleeae</taxon>
        <taxon>Olea</taxon>
    </lineage>
</organism>
<protein>
    <recommendedName>
        <fullName>Profilin-1</fullName>
    </recommendedName>
    <alternativeName>
        <fullName>Pollen allergen Ole e 2</fullName>
    </alternativeName>
    <allergenName>Ole e 2</allergenName>
</protein>
<name>PROFM_OLEEU</name>
<accession>P0DKD7</accession>
<accession>A4GCR3</accession>
<evidence type="ECO:0000250" key="1"/>
<evidence type="ECO:0000305" key="2"/>
<evidence type="ECO:0000305" key="3">
    <source>
    </source>
</evidence>